<keyword id="KW-0106">Calcium</keyword>
<keyword id="KW-0325">Glycoprotein</keyword>
<keyword id="KW-0430">Lectin</keyword>
<keyword id="KW-0464">Manganese</keyword>
<keyword id="KW-0479">Metal-binding</keyword>
<keyword id="KW-0732">Signal</keyword>
<feature type="signal peptide">
    <location>
        <begin position="1" status="less than"/>
        <end position="29"/>
    </location>
</feature>
<feature type="chain" id="PRO_0000017646" description="Putative bark agglutinin LECRPA3">
    <location>
        <begin position="30"/>
        <end position="272"/>
    </location>
</feature>
<feature type="binding site" evidence="1">
    <location>
        <position position="150"/>
    </location>
    <ligand>
        <name>Mn(2+)</name>
        <dbReference type="ChEBI" id="CHEBI:29035"/>
    </ligand>
</feature>
<feature type="binding site" evidence="1">
    <location>
        <position position="152"/>
    </location>
    <ligand>
        <name>Ca(2+)</name>
        <dbReference type="ChEBI" id="CHEBI:29108"/>
    </ligand>
</feature>
<feature type="binding site" evidence="1">
    <location>
        <position position="152"/>
    </location>
    <ligand>
        <name>Mn(2+)</name>
        <dbReference type="ChEBI" id="CHEBI:29035"/>
    </ligand>
</feature>
<feature type="binding site" evidence="1">
    <location>
        <position position="154"/>
    </location>
    <ligand>
        <name>Ca(2+)</name>
        <dbReference type="ChEBI" id="CHEBI:29108"/>
    </ligand>
</feature>
<feature type="binding site" evidence="1">
    <location>
        <position position="156"/>
    </location>
    <ligand>
        <name>Ca(2+)</name>
        <dbReference type="ChEBI" id="CHEBI:29108"/>
    </ligand>
</feature>
<feature type="binding site" evidence="1">
    <location>
        <position position="159"/>
    </location>
    <ligand>
        <name>Ca(2+)</name>
        <dbReference type="ChEBI" id="CHEBI:29108"/>
    </ligand>
</feature>
<feature type="binding site" evidence="1">
    <location>
        <position position="159"/>
    </location>
    <ligand>
        <name>Mn(2+)</name>
        <dbReference type="ChEBI" id="CHEBI:29035"/>
    </ligand>
</feature>
<feature type="binding site" evidence="1">
    <location>
        <position position="164"/>
    </location>
    <ligand>
        <name>Mn(2+)</name>
        <dbReference type="ChEBI" id="CHEBI:29035"/>
    </ligand>
</feature>
<feature type="glycosylation site" description="N-linked (GlcNAc...) asparagine" evidence="2">
    <location>
        <position position="36"/>
    </location>
</feature>
<feature type="glycosylation site" description="N-linked (GlcNAc...) asparagine" evidence="2">
    <location>
        <position position="39"/>
    </location>
</feature>
<feature type="glycosylation site" description="N-linked (GlcNAc...) asparagine" evidence="2">
    <location>
        <position position="65"/>
    </location>
</feature>
<feature type="non-terminal residue">
    <location>
        <position position="1"/>
    </location>
</feature>
<organism>
    <name type="scientific">Robinia pseudoacacia</name>
    <name type="common">Black locust</name>
    <dbReference type="NCBI Taxonomy" id="35938"/>
    <lineage>
        <taxon>Eukaryota</taxon>
        <taxon>Viridiplantae</taxon>
        <taxon>Streptophyta</taxon>
        <taxon>Embryophyta</taxon>
        <taxon>Tracheophyta</taxon>
        <taxon>Spermatophyta</taxon>
        <taxon>Magnoliopsida</taxon>
        <taxon>eudicotyledons</taxon>
        <taxon>Gunneridae</taxon>
        <taxon>Pentapetalae</taxon>
        <taxon>rosids</taxon>
        <taxon>fabids</taxon>
        <taxon>Fabales</taxon>
        <taxon>Fabaceae</taxon>
        <taxon>Papilionoideae</taxon>
        <taxon>50 kb inversion clade</taxon>
        <taxon>NPAAA clade</taxon>
        <taxon>Hologalegina</taxon>
        <taxon>robinioid clade</taxon>
        <taxon>Robinieae</taxon>
        <taxon>Robinia</taxon>
    </lineage>
</organism>
<comment type="function">
    <text>Bark lectins are storage proteins that probably maintain stocks of nitrogen during dormant period. Self-aggregatable molecules that can bind their own carbohydrate side chains. They could also play a role in the plant's defense against phytophagous invertebrates or herbivorous higher animals.</text>
</comment>
<comment type="subunit">
    <text evidence="3">Homotetramer.</text>
</comment>
<comment type="tissue specificity">
    <text>Weak expression in bark. The lectin accumulates in the inner bark in autumn.</text>
</comment>
<comment type="similarity">
    <text evidence="3">Belongs to the leguminous lectin family.</text>
</comment>
<comment type="sequence caution" evidence="3">
    <conflict type="erroneous initiation">
        <sequence resource="EMBL-CDS" id="AAA80183"/>
    </conflict>
</comment>
<name>LCB3_ROBPS</name>
<evidence type="ECO:0000250" key="1"/>
<evidence type="ECO:0000255" key="2"/>
<evidence type="ECO:0000305" key="3"/>
<reference key="1">
    <citation type="journal article" date="1995" name="Plant Physiol.">
        <title>The bark of Robinia pseudoacacia contains a complex mixture of lectins. Characterization of the proteins and the cDNA clones.</title>
        <authorList>
            <person name="van Damme E.J.M."/>
            <person name="Barre A."/>
            <person name="Smeets K."/>
            <person name="Torrekens S."/>
            <person name="van Leuven F."/>
            <person name="Rouge P."/>
            <person name="Peumans W.J."/>
        </authorList>
    </citation>
    <scope>NUCLEOTIDE SEQUENCE [MRNA]</scope>
    <source>
        <tissue>Bark</tissue>
    </source>
</reference>
<proteinExistence type="evidence at transcript level"/>
<sequence>PFNPETVYALLAMLISFFVLLASARKENSDEGISFNFTNFTRGDQGVTLLGQANIMANGILALTNHTNPTWNTGRALYSKPVPIWDSATGNVASFVTSFSFVVQEIKGAIPADGIVFFLAPEARIPDNSAGGQLGIVNANKAYNPFVGVEFDTYSNNWDPKSAHIGIDASSLISLRTVKWNKVSGSLVKVSIIYDSLSKTLSVVVTHENGQISTIAQVVDLKAVLGEKVRVGFTAATTTGRELYDIHAWSFTSTLVTATSSTSKNMNIASYA</sequence>
<protein>
    <recommendedName>
        <fullName>Putative bark agglutinin LECRPA3</fullName>
    </recommendedName>
</protein>
<dbReference type="EMBL" id="U12784">
    <property type="protein sequence ID" value="AAA80183.1"/>
    <property type="status" value="ALT_INIT"/>
    <property type="molecule type" value="mRNA"/>
</dbReference>
<dbReference type="SMR" id="Q41160"/>
<dbReference type="GO" id="GO:0030246">
    <property type="term" value="F:carbohydrate binding"/>
    <property type="evidence" value="ECO:0007669"/>
    <property type="project" value="UniProtKB-KW"/>
</dbReference>
<dbReference type="GO" id="GO:0046872">
    <property type="term" value="F:metal ion binding"/>
    <property type="evidence" value="ECO:0007669"/>
    <property type="project" value="UniProtKB-KW"/>
</dbReference>
<dbReference type="CDD" id="cd06899">
    <property type="entry name" value="lectin_legume_LecRK_Arcelin_ConA"/>
    <property type="match status" value="1"/>
</dbReference>
<dbReference type="Gene3D" id="2.60.120.200">
    <property type="match status" value="1"/>
</dbReference>
<dbReference type="InterPro" id="IPR013320">
    <property type="entry name" value="ConA-like_dom_sf"/>
</dbReference>
<dbReference type="InterPro" id="IPR016363">
    <property type="entry name" value="L-lectin"/>
</dbReference>
<dbReference type="InterPro" id="IPR000985">
    <property type="entry name" value="Lectin_LegA_CS"/>
</dbReference>
<dbReference type="InterPro" id="IPR019825">
    <property type="entry name" value="Lectin_legB_Mn/Ca_BS"/>
</dbReference>
<dbReference type="InterPro" id="IPR001220">
    <property type="entry name" value="Legume_lectin_dom"/>
</dbReference>
<dbReference type="InterPro" id="IPR050258">
    <property type="entry name" value="Leguminous_Lectin"/>
</dbReference>
<dbReference type="PANTHER" id="PTHR32401">
    <property type="entry name" value="CONCANAVALIN A-LIKE LECTIN FAMILY PROTEIN"/>
    <property type="match status" value="1"/>
</dbReference>
<dbReference type="PANTHER" id="PTHR32401:SF49">
    <property type="entry name" value="OS10G0129200 PROTEIN"/>
    <property type="match status" value="1"/>
</dbReference>
<dbReference type="Pfam" id="PF00139">
    <property type="entry name" value="Lectin_legB"/>
    <property type="match status" value="1"/>
</dbReference>
<dbReference type="PIRSF" id="PIRSF002690">
    <property type="entry name" value="L-type_lectin_plant"/>
    <property type="match status" value="1"/>
</dbReference>
<dbReference type="SUPFAM" id="SSF49899">
    <property type="entry name" value="Concanavalin A-like lectins/glucanases"/>
    <property type="match status" value="1"/>
</dbReference>
<dbReference type="PROSITE" id="PS00308">
    <property type="entry name" value="LECTIN_LEGUME_ALPHA"/>
    <property type="match status" value="1"/>
</dbReference>
<dbReference type="PROSITE" id="PS00307">
    <property type="entry name" value="LECTIN_LEGUME_BETA"/>
    <property type="match status" value="1"/>
</dbReference>
<accession>Q41160</accession>